<protein>
    <recommendedName>
        <fullName evidence="1">UPF0325 protein YE3288</fullName>
    </recommendedName>
</protein>
<comment type="similarity">
    <text evidence="1">Belongs to the UPF0325 family.</text>
</comment>
<sequence length="129" mass="15145">MYDNLKSLGITQPEDVDRYSLRQEANNDILKIYFRKDKGEFFAKSVKFKYPRQRKTVVADNAGHGYKEINEINPNLRYVIDELDQLCKRDQVEVDLKRKILDDLRHLESVVTNKIAEIEADLEKLTSGR</sequence>
<accession>A1JP87</accession>
<dbReference type="EMBL" id="AM286415">
    <property type="protein sequence ID" value="CAL13318.1"/>
    <property type="molecule type" value="Genomic_DNA"/>
</dbReference>
<dbReference type="RefSeq" id="WP_005164058.1">
    <property type="nucleotide sequence ID" value="NC_008800.1"/>
</dbReference>
<dbReference type="RefSeq" id="YP_001007462.1">
    <property type="nucleotide sequence ID" value="NC_008800.1"/>
</dbReference>
<dbReference type="SMR" id="A1JP87"/>
<dbReference type="KEGG" id="yen:YE3288"/>
<dbReference type="PATRIC" id="fig|393305.7.peg.3498"/>
<dbReference type="eggNOG" id="ENOG502ZBV4">
    <property type="taxonomic scope" value="Bacteria"/>
</dbReference>
<dbReference type="HOGENOM" id="CLU_136774_0_0_6"/>
<dbReference type="OrthoDB" id="5624524at2"/>
<dbReference type="Proteomes" id="UP000000642">
    <property type="component" value="Chromosome"/>
</dbReference>
<dbReference type="HAMAP" id="MF_01519">
    <property type="entry name" value="UPF0325"/>
    <property type="match status" value="1"/>
</dbReference>
<dbReference type="InterPro" id="IPR020911">
    <property type="entry name" value="UPF0325"/>
</dbReference>
<dbReference type="NCBIfam" id="NF010213">
    <property type="entry name" value="PRK13677.1"/>
    <property type="match status" value="1"/>
</dbReference>
<dbReference type="Pfam" id="PF11944">
    <property type="entry name" value="DUF3461"/>
    <property type="match status" value="1"/>
</dbReference>
<proteinExistence type="inferred from homology"/>
<feature type="chain" id="PRO_0000289323" description="UPF0325 protein YE3288">
    <location>
        <begin position="1"/>
        <end position="129"/>
    </location>
</feature>
<organism>
    <name type="scientific">Yersinia enterocolitica serotype O:8 / biotype 1B (strain NCTC 13174 / 8081)</name>
    <dbReference type="NCBI Taxonomy" id="393305"/>
    <lineage>
        <taxon>Bacteria</taxon>
        <taxon>Pseudomonadati</taxon>
        <taxon>Pseudomonadota</taxon>
        <taxon>Gammaproteobacteria</taxon>
        <taxon>Enterobacterales</taxon>
        <taxon>Yersiniaceae</taxon>
        <taxon>Yersinia</taxon>
    </lineage>
</organism>
<evidence type="ECO:0000255" key="1">
    <source>
        <dbReference type="HAMAP-Rule" id="MF_01519"/>
    </source>
</evidence>
<gene>
    <name type="ordered locus">YE3288</name>
</gene>
<reference key="1">
    <citation type="journal article" date="2006" name="PLoS Genet.">
        <title>The complete genome sequence and comparative genome analysis of the high pathogenicity Yersinia enterocolitica strain 8081.</title>
        <authorList>
            <person name="Thomson N.R."/>
            <person name="Howard S."/>
            <person name="Wren B.W."/>
            <person name="Holden M.T.G."/>
            <person name="Crossman L."/>
            <person name="Challis G.L."/>
            <person name="Churcher C."/>
            <person name="Mungall K."/>
            <person name="Brooks K."/>
            <person name="Chillingworth T."/>
            <person name="Feltwell T."/>
            <person name="Abdellah Z."/>
            <person name="Hauser H."/>
            <person name="Jagels K."/>
            <person name="Maddison M."/>
            <person name="Moule S."/>
            <person name="Sanders M."/>
            <person name="Whitehead S."/>
            <person name="Quail M.A."/>
            <person name="Dougan G."/>
            <person name="Parkhill J."/>
            <person name="Prentice M.B."/>
        </authorList>
    </citation>
    <scope>NUCLEOTIDE SEQUENCE [LARGE SCALE GENOMIC DNA]</scope>
    <source>
        <strain>NCTC 13174 / 8081</strain>
    </source>
</reference>
<name>Y3288_YERE8</name>